<name>SYC_SACS2</name>
<organism>
    <name type="scientific">Saccharolobus solfataricus (strain ATCC 35092 / DSM 1617 / JCM 11322 / P2)</name>
    <name type="common">Sulfolobus solfataricus</name>
    <dbReference type="NCBI Taxonomy" id="273057"/>
    <lineage>
        <taxon>Archaea</taxon>
        <taxon>Thermoproteota</taxon>
        <taxon>Thermoprotei</taxon>
        <taxon>Sulfolobales</taxon>
        <taxon>Sulfolobaceae</taxon>
        <taxon>Saccharolobus</taxon>
    </lineage>
</organism>
<dbReference type="EC" id="6.1.1.16" evidence="1"/>
<dbReference type="EMBL" id="AE006641">
    <property type="protein sequence ID" value="AAK42442.1"/>
    <property type="molecule type" value="Genomic_DNA"/>
</dbReference>
<dbReference type="PIR" id="C90398">
    <property type="entry name" value="C90398"/>
</dbReference>
<dbReference type="RefSeq" id="WP_009991836.1">
    <property type="nucleotide sequence ID" value="NC_002754.1"/>
</dbReference>
<dbReference type="SMR" id="Q97WE6"/>
<dbReference type="FunCoup" id="Q97WE6">
    <property type="interactions" value="221"/>
</dbReference>
<dbReference type="STRING" id="273057.SSO2280"/>
<dbReference type="PaxDb" id="273057-SSO2280"/>
<dbReference type="EnsemblBacteria" id="AAK42442">
    <property type="protein sequence ID" value="AAK42442"/>
    <property type="gene ID" value="SSO2280"/>
</dbReference>
<dbReference type="GeneID" id="44128012"/>
<dbReference type="KEGG" id="sso:SSO2280"/>
<dbReference type="PATRIC" id="fig|273057.12.peg.2373"/>
<dbReference type="eggNOG" id="arCOG00486">
    <property type="taxonomic scope" value="Archaea"/>
</dbReference>
<dbReference type="HOGENOM" id="CLU_013528_0_1_2"/>
<dbReference type="InParanoid" id="Q97WE6"/>
<dbReference type="PhylomeDB" id="Q97WE6"/>
<dbReference type="Proteomes" id="UP000001974">
    <property type="component" value="Chromosome"/>
</dbReference>
<dbReference type="GO" id="GO:0005737">
    <property type="term" value="C:cytoplasm"/>
    <property type="evidence" value="ECO:0000318"/>
    <property type="project" value="GO_Central"/>
</dbReference>
<dbReference type="GO" id="GO:0005524">
    <property type="term" value="F:ATP binding"/>
    <property type="evidence" value="ECO:0000318"/>
    <property type="project" value="GO_Central"/>
</dbReference>
<dbReference type="GO" id="GO:0004817">
    <property type="term" value="F:cysteine-tRNA ligase activity"/>
    <property type="evidence" value="ECO:0000318"/>
    <property type="project" value="GO_Central"/>
</dbReference>
<dbReference type="GO" id="GO:0008270">
    <property type="term" value="F:zinc ion binding"/>
    <property type="evidence" value="ECO:0007669"/>
    <property type="project" value="UniProtKB-UniRule"/>
</dbReference>
<dbReference type="GO" id="GO:0006423">
    <property type="term" value="P:cysteinyl-tRNA aminoacylation"/>
    <property type="evidence" value="ECO:0000318"/>
    <property type="project" value="GO_Central"/>
</dbReference>
<dbReference type="CDD" id="cd00672">
    <property type="entry name" value="CysRS_core"/>
    <property type="match status" value="1"/>
</dbReference>
<dbReference type="FunFam" id="3.40.50.620:FF:000068">
    <property type="entry name" value="Cysteine--tRNA ligase"/>
    <property type="match status" value="1"/>
</dbReference>
<dbReference type="Gene3D" id="1.20.120.1910">
    <property type="entry name" value="Cysteine-tRNA ligase, C-terminal anti-codon recognition domain"/>
    <property type="match status" value="1"/>
</dbReference>
<dbReference type="Gene3D" id="3.40.50.620">
    <property type="entry name" value="HUPs"/>
    <property type="match status" value="1"/>
</dbReference>
<dbReference type="HAMAP" id="MF_00041">
    <property type="entry name" value="Cys_tRNA_synth"/>
    <property type="match status" value="1"/>
</dbReference>
<dbReference type="InterPro" id="IPR015803">
    <property type="entry name" value="Cys-tRNA-ligase"/>
</dbReference>
<dbReference type="InterPro" id="IPR015273">
    <property type="entry name" value="Cys-tRNA-synt_Ia_DALR"/>
</dbReference>
<dbReference type="InterPro" id="IPR024909">
    <property type="entry name" value="Cys-tRNA/MSH_ligase"/>
</dbReference>
<dbReference type="InterPro" id="IPR014729">
    <property type="entry name" value="Rossmann-like_a/b/a_fold"/>
</dbReference>
<dbReference type="InterPro" id="IPR032678">
    <property type="entry name" value="tRNA-synt_1_cat_dom"/>
</dbReference>
<dbReference type="InterPro" id="IPR009080">
    <property type="entry name" value="tRNAsynth_Ia_anticodon-bd"/>
</dbReference>
<dbReference type="NCBIfam" id="TIGR00435">
    <property type="entry name" value="cysS"/>
    <property type="match status" value="1"/>
</dbReference>
<dbReference type="PANTHER" id="PTHR10890:SF3">
    <property type="entry name" value="CYSTEINE--TRNA LIGASE, CYTOPLASMIC"/>
    <property type="match status" value="1"/>
</dbReference>
<dbReference type="PANTHER" id="PTHR10890">
    <property type="entry name" value="CYSTEINYL-TRNA SYNTHETASE"/>
    <property type="match status" value="1"/>
</dbReference>
<dbReference type="Pfam" id="PF09190">
    <property type="entry name" value="DALR_2"/>
    <property type="match status" value="1"/>
</dbReference>
<dbReference type="Pfam" id="PF01406">
    <property type="entry name" value="tRNA-synt_1e"/>
    <property type="match status" value="1"/>
</dbReference>
<dbReference type="PRINTS" id="PR00983">
    <property type="entry name" value="TRNASYNTHCYS"/>
</dbReference>
<dbReference type="SMART" id="SM00840">
    <property type="entry name" value="DALR_2"/>
    <property type="match status" value="1"/>
</dbReference>
<dbReference type="SUPFAM" id="SSF47323">
    <property type="entry name" value="Anticodon-binding domain of a subclass of class I aminoacyl-tRNA synthetases"/>
    <property type="match status" value="1"/>
</dbReference>
<dbReference type="SUPFAM" id="SSF52374">
    <property type="entry name" value="Nucleotidylyl transferase"/>
    <property type="match status" value="1"/>
</dbReference>
<protein>
    <recommendedName>
        <fullName evidence="1">Cysteine--tRNA ligase</fullName>
        <ecNumber evidence="1">6.1.1.16</ecNumber>
    </recommendedName>
    <alternativeName>
        <fullName evidence="1">Cysteinyl-tRNA synthetase</fullName>
        <shortName evidence="1">CysRS</shortName>
    </alternativeName>
</protein>
<evidence type="ECO:0000255" key="1">
    <source>
        <dbReference type="HAMAP-Rule" id="MF_00041"/>
    </source>
</evidence>
<feature type="chain" id="PRO_0000159546" description="Cysteine--tRNA ligase">
    <location>
        <begin position="1"/>
        <end position="470"/>
    </location>
</feature>
<feature type="short sequence motif" description="'HIGH' region">
    <location>
        <begin position="33"/>
        <end position="43"/>
    </location>
</feature>
<feature type="short sequence motif" description="'KMSKS' region">
    <location>
        <begin position="266"/>
        <end position="270"/>
    </location>
</feature>
<feature type="binding site" evidence="1">
    <location>
        <position position="31"/>
    </location>
    <ligand>
        <name>Zn(2+)</name>
        <dbReference type="ChEBI" id="CHEBI:29105"/>
    </ligand>
</feature>
<feature type="binding site" evidence="1">
    <location>
        <position position="209"/>
    </location>
    <ligand>
        <name>Zn(2+)</name>
        <dbReference type="ChEBI" id="CHEBI:29105"/>
    </ligand>
</feature>
<feature type="binding site" evidence="1">
    <location>
        <position position="234"/>
    </location>
    <ligand>
        <name>Zn(2+)</name>
        <dbReference type="ChEBI" id="CHEBI:29105"/>
    </ligand>
</feature>
<feature type="binding site" evidence="1">
    <location>
        <position position="238"/>
    </location>
    <ligand>
        <name>Zn(2+)</name>
        <dbReference type="ChEBI" id="CHEBI:29105"/>
    </ligand>
</feature>
<feature type="binding site" evidence="1">
    <location>
        <position position="269"/>
    </location>
    <ligand>
        <name>ATP</name>
        <dbReference type="ChEBI" id="CHEBI:30616"/>
    </ligand>
</feature>
<keyword id="KW-0030">Aminoacyl-tRNA synthetase</keyword>
<keyword id="KW-0067">ATP-binding</keyword>
<keyword id="KW-0963">Cytoplasm</keyword>
<keyword id="KW-0436">Ligase</keyword>
<keyword id="KW-0479">Metal-binding</keyword>
<keyword id="KW-0547">Nucleotide-binding</keyword>
<keyword id="KW-0648">Protein biosynthesis</keyword>
<keyword id="KW-1185">Reference proteome</keyword>
<keyword id="KW-0862">Zinc</keyword>
<reference key="1">
    <citation type="journal article" date="2001" name="Proc. Natl. Acad. Sci. U.S.A.">
        <title>The complete genome of the crenarchaeon Sulfolobus solfataricus P2.</title>
        <authorList>
            <person name="She Q."/>
            <person name="Singh R.K."/>
            <person name="Confalonieri F."/>
            <person name="Zivanovic Y."/>
            <person name="Allard G."/>
            <person name="Awayez M.J."/>
            <person name="Chan-Weiher C.C.-Y."/>
            <person name="Clausen I.G."/>
            <person name="Curtis B.A."/>
            <person name="De Moors A."/>
            <person name="Erauso G."/>
            <person name="Fletcher C."/>
            <person name="Gordon P.M.K."/>
            <person name="Heikamp-de Jong I."/>
            <person name="Jeffries A.C."/>
            <person name="Kozera C.J."/>
            <person name="Medina N."/>
            <person name="Peng X."/>
            <person name="Thi-Ngoc H.P."/>
            <person name="Redder P."/>
            <person name="Schenk M.E."/>
            <person name="Theriault C."/>
            <person name="Tolstrup N."/>
            <person name="Charlebois R.L."/>
            <person name="Doolittle W.F."/>
            <person name="Duguet M."/>
            <person name="Gaasterland T."/>
            <person name="Garrett R.A."/>
            <person name="Ragan M.A."/>
            <person name="Sensen C.W."/>
            <person name="Van der Oost J."/>
        </authorList>
    </citation>
    <scope>NUCLEOTIDE SEQUENCE [LARGE SCALE GENOMIC DNA]</scope>
    <source>
        <strain>ATCC 35092 / DSM 1617 / JCM 11322 / P2</strain>
    </source>
</reference>
<sequence length="470" mass="55326">MDFRIRVYNSLGRKLEEFGTVEPNLVKMYVCGPTVYDYVHIGHGRTFVVFDAISRYLRLRGYTVIRVQNITDIDDKIIKKSQEIGKDWNEIVDYFTKDYLDMLSQLKVKIDIHPRVTQHIREIIDFVQRLIDKGHAYVAPSGSVYFDVDTYPNYGELSNTKKEEWNQGEEFVKEKKHSYDFALWKAWKPGEPYWESPWGKGRPGWHIECSTMSTRYLGERFDIHGGGADLIFPHHENERAQTEALIGEKWVTYWVHSAFVTIRKEKMSKSLGNIIPLNEAIKKWGPSVLRYWYLTSHYRSPIDFSEEALEQAKSALQRIKDSMAIIRDVISEGPKFYVKDDDIKVYREILNNLNNFHTAMSNDFDTSTALSYIHEIVRLVFSTLQYSRDFLGAMLAFETLKQFNEVFGVMDEEFYPTYDKMYKIIDAVVDIRNQLRQMKLYEISDKIREELLKAGVRILDSKDKSTWRFE</sequence>
<proteinExistence type="inferred from homology"/>
<accession>Q97WE6</accession>
<gene>
    <name evidence="1" type="primary">cysS</name>
    <name type="ordered locus">SSO2280</name>
</gene>
<comment type="catalytic activity">
    <reaction evidence="1">
        <text>tRNA(Cys) + L-cysteine + ATP = L-cysteinyl-tRNA(Cys) + AMP + diphosphate</text>
        <dbReference type="Rhea" id="RHEA:17773"/>
        <dbReference type="Rhea" id="RHEA-COMP:9661"/>
        <dbReference type="Rhea" id="RHEA-COMP:9679"/>
        <dbReference type="ChEBI" id="CHEBI:30616"/>
        <dbReference type="ChEBI" id="CHEBI:33019"/>
        <dbReference type="ChEBI" id="CHEBI:35235"/>
        <dbReference type="ChEBI" id="CHEBI:78442"/>
        <dbReference type="ChEBI" id="CHEBI:78517"/>
        <dbReference type="ChEBI" id="CHEBI:456215"/>
        <dbReference type="EC" id="6.1.1.16"/>
    </reaction>
</comment>
<comment type="cofactor">
    <cofactor evidence="1">
        <name>Zn(2+)</name>
        <dbReference type="ChEBI" id="CHEBI:29105"/>
    </cofactor>
    <text evidence="1">Binds 1 zinc ion per subunit.</text>
</comment>
<comment type="subcellular location">
    <subcellularLocation>
        <location evidence="1">Cytoplasm</location>
    </subcellularLocation>
</comment>
<comment type="similarity">
    <text evidence="1">Belongs to the class-I aminoacyl-tRNA synthetase family.</text>
</comment>